<protein>
    <recommendedName>
        <fullName>Magnesium transporter MRS2-11, chloroplastic</fullName>
    </recommendedName>
    <alternativeName>
        <fullName>Magnesium Transporter 10</fullName>
        <shortName>AtMGT10</shortName>
    </alternativeName>
</protein>
<comment type="function">
    <text evidence="3 6">High-affinity magnesium transporter that mediates the influx of magnesium in chloroplast.</text>
</comment>
<comment type="subcellular location">
    <subcellularLocation>
        <location evidence="4 6">Plastid</location>
        <location evidence="4 6">Chloroplast membrane</location>
        <topology evidence="4 6">Multi-pass membrane protein</topology>
    </subcellularLocation>
</comment>
<comment type="tissue specificity">
    <text evidence="3 5 6">Expressed in the green part of the plant. Preferentially expressed in the spongy mesophyll cells and stomata of young leaves but also detected in cotyledons and at the base of the leaf petioles.</text>
</comment>
<comment type="induction">
    <text evidence="6">By light.</text>
</comment>
<comment type="miscellaneous">
    <text>Has the ability to complement a mutant in yeast lacking magnesium transport capability.</text>
</comment>
<comment type="similarity">
    <text evidence="7">Belongs to the CorA metal ion transporter (MIT) (TC 1.A.35.5) family.</text>
</comment>
<comment type="sequence caution" evidence="7">
    <conflict type="erroneous gene model prediction">
        <sequence resource="EMBL-CDS" id="BAB10604"/>
    </conflict>
</comment>
<reference key="1">
    <citation type="journal article" date="2001" name="Plant Cell">
        <title>A novel family of magnesium transport genes in Arabidopsis.</title>
        <authorList>
            <person name="Li L."/>
            <person name="Tutone A.F."/>
            <person name="Drummond R.S."/>
            <person name="Gardner R.C."/>
            <person name="Luan S."/>
        </authorList>
    </citation>
    <scope>NUCLEOTIDE SEQUENCE [MRNA]</scope>
    <scope>FUNCTION</scope>
    <scope>GENE FAMILY</scope>
    <scope>TISSUE SPECIFICITY</scope>
</reference>
<reference key="2">
    <citation type="journal article" date="1997" name="DNA Res.">
        <title>Structural analysis of Arabidopsis thaliana chromosome 5. I. Sequence features of the 1.6 Mb regions covered by twenty physically assigned P1 clones.</title>
        <authorList>
            <person name="Sato S."/>
            <person name="Kotani H."/>
            <person name="Nakamura Y."/>
            <person name="Kaneko T."/>
            <person name="Asamizu E."/>
            <person name="Fukami M."/>
            <person name="Miyajima N."/>
            <person name="Tabata S."/>
        </authorList>
    </citation>
    <scope>NUCLEOTIDE SEQUENCE [LARGE SCALE GENOMIC DNA]</scope>
    <source>
        <strain>cv. Columbia</strain>
    </source>
</reference>
<reference key="3">
    <citation type="journal article" date="2017" name="Plant J.">
        <title>Araport11: a complete reannotation of the Arabidopsis thaliana reference genome.</title>
        <authorList>
            <person name="Cheng C.Y."/>
            <person name="Krishnakumar V."/>
            <person name="Chan A.P."/>
            <person name="Thibaud-Nissen F."/>
            <person name="Schobel S."/>
            <person name="Town C.D."/>
        </authorList>
    </citation>
    <scope>GENOME REANNOTATION</scope>
    <source>
        <strain>cv. Columbia</strain>
    </source>
</reference>
<reference key="4">
    <citation type="submission" date="2006-10" db="EMBL/GenBank/DDBJ databases">
        <title>Arabidopsis ORF Clones.</title>
        <authorList>
            <person name="Bautista V.R."/>
            <person name="Kim C.J."/>
            <person name="Chen H."/>
            <person name="Quinitio C."/>
            <person name="Ecker J.R."/>
        </authorList>
    </citation>
    <scope>NUCLEOTIDE SEQUENCE [LARGE SCALE MRNA]</scope>
    <source>
        <strain>cv. Columbia</strain>
    </source>
</reference>
<reference key="5">
    <citation type="journal article" date="2006" name="Plant Sci.">
        <title>A putative magnesium transporter AtMRS2-11 is localized to the plant chloroplast envelope membrane system.</title>
        <authorList>
            <person name="Drummond R.S."/>
            <person name="Tutone A.F."/>
            <person name="Li Y.-C."/>
            <person name="Gardner R.C."/>
        </authorList>
    </citation>
    <scope>SUBCELLULAR LOCATION</scope>
    <scope>FUNCTION</scope>
    <scope>TISSUE SPECIFICITY</scope>
    <scope>INDUCTION BY LIGHT</scope>
</reference>
<reference key="6">
    <citation type="journal article" date="2008" name="PLoS ONE">
        <title>Sorting signals, N-terminal modifications and abundance of the chloroplast proteome.</title>
        <authorList>
            <person name="Zybailov B."/>
            <person name="Rutschow H."/>
            <person name="Friso G."/>
            <person name="Rudella A."/>
            <person name="Emanuelsson O."/>
            <person name="Sun Q."/>
            <person name="van Wijk K.J."/>
        </authorList>
    </citation>
    <scope>IDENTIFICATION BY MASS SPECTROMETRY</scope>
    <scope>SUBCELLULAR LOCATION [LARGE SCALE ANALYSIS]</scope>
</reference>
<reference key="7">
    <citation type="journal article" date="2009" name="Plant Cell">
        <title>A root-expressed magnesium transporter of the MRS2/MGT gene family in Arabidopsis thaliana allows for growth in low-Mg2+ environments.</title>
        <authorList>
            <person name="Gebert M."/>
            <person name="Meschenmoser K."/>
            <person name="Svidova S."/>
            <person name="Weghuber J."/>
            <person name="Schweyen R."/>
            <person name="Eifler K."/>
            <person name="Lenz H."/>
            <person name="Weyand K."/>
            <person name="Knoop V."/>
        </authorList>
    </citation>
    <scope>GENE FAMILY</scope>
    <scope>NOMENCLATURE</scope>
    <scope>TISSUE SPECIFICITY</scope>
</reference>
<name>MRS2B_ARATH</name>
<proteinExistence type="evidence at protein level"/>
<feature type="transit peptide" description="Chloroplast" evidence="1">
    <location>
        <begin position="1"/>
        <end position="62"/>
    </location>
</feature>
<feature type="chain" id="PRO_0000394175" description="Magnesium transporter MRS2-11, chloroplastic">
    <location>
        <begin position="63"/>
        <end position="459"/>
    </location>
</feature>
<feature type="transmembrane region" description="Helical" evidence="1">
    <location>
        <begin position="397"/>
        <end position="417"/>
    </location>
</feature>
<feature type="transmembrane region" description="Helical" evidence="1">
    <location>
        <begin position="430"/>
        <end position="450"/>
    </location>
</feature>
<feature type="region of interest" description="Disordered" evidence="2">
    <location>
        <begin position="76"/>
        <end position="122"/>
    </location>
</feature>
<feature type="short sequence motif" description="Required for magnesium transport activity">
    <location>
        <begin position="417"/>
        <end position="419"/>
    </location>
</feature>
<feature type="compositionally biased region" description="Basic and acidic residues" evidence="2">
    <location>
        <begin position="101"/>
        <end position="110"/>
    </location>
</feature>
<feature type="compositionally biased region" description="Low complexity" evidence="2">
    <location>
        <begin position="111"/>
        <end position="122"/>
    </location>
</feature>
<feature type="sequence conflict" description="In Ref. 1; AAG45213." evidence="7" ref="1">
    <original>RT</original>
    <variation>KN</variation>
    <location>
        <begin position="47"/>
        <end position="48"/>
    </location>
</feature>
<gene>
    <name type="primary">MRS2-11</name>
    <name type="synonym">GMN10</name>
    <name type="synonym">MGT10</name>
    <name type="ordered locus">At5g22830</name>
    <name type="ORF">MRN17.6</name>
</gene>
<accession>Q058N4</accession>
<accession>Q9FFC4</accession>
<accession>Q9FPL0</accession>
<evidence type="ECO:0000255" key="1"/>
<evidence type="ECO:0000256" key="2">
    <source>
        <dbReference type="SAM" id="MobiDB-lite"/>
    </source>
</evidence>
<evidence type="ECO:0000269" key="3">
    <source>
    </source>
</evidence>
<evidence type="ECO:0000269" key="4">
    <source>
    </source>
</evidence>
<evidence type="ECO:0000269" key="5">
    <source>
    </source>
</evidence>
<evidence type="ECO:0000269" key="6">
    <source ref="5"/>
</evidence>
<evidence type="ECO:0000305" key="7"/>
<keyword id="KW-0150">Chloroplast</keyword>
<keyword id="KW-0406">Ion transport</keyword>
<keyword id="KW-0460">Magnesium</keyword>
<keyword id="KW-0472">Membrane</keyword>
<keyword id="KW-0934">Plastid</keyword>
<keyword id="KW-1185">Reference proteome</keyword>
<keyword id="KW-0809">Transit peptide</keyword>
<keyword id="KW-0812">Transmembrane</keyword>
<keyword id="KW-1133">Transmembrane helix</keyword>
<keyword id="KW-0813">Transport</keyword>
<organism>
    <name type="scientific">Arabidopsis thaliana</name>
    <name type="common">Mouse-ear cress</name>
    <dbReference type="NCBI Taxonomy" id="3702"/>
    <lineage>
        <taxon>Eukaryota</taxon>
        <taxon>Viridiplantae</taxon>
        <taxon>Streptophyta</taxon>
        <taxon>Embryophyta</taxon>
        <taxon>Tracheophyta</taxon>
        <taxon>Spermatophyta</taxon>
        <taxon>Magnoliopsida</taxon>
        <taxon>eudicotyledons</taxon>
        <taxon>Gunneridae</taxon>
        <taxon>Pentapetalae</taxon>
        <taxon>rosids</taxon>
        <taxon>malvids</taxon>
        <taxon>Brassicales</taxon>
        <taxon>Brassicaceae</taxon>
        <taxon>Camelineae</taxon>
        <taxon>Arabidopsis</taxon>
    </lineage>
</organism>
<dbReference type="EMBL" id="AF322255">
    <property type="protein sequence ID" value="AAG45213.1"/>
    <property type="molecule type" value="mRNA"/>
</dbReference>
<dbReference type="EMBL" id="AB005243">
    <property type="protein sequence ID" value="BAB10604.1"/>
    <property type="status" value="ALT_SEQ"/>
    <property type="molecule type" value="Genomic_DNA"/>
</dbReference>
<dbReference type="EMBL" id="CP002688">
    <property type="protein sequence ID" value="AED93085.1"/>
    <property type="molecule type" value="Genomic_DNA"/>
</dbReference>
<dbReference type="EMBL" id="CP002688">
    <property type="protein sequence ID" value="ANM70562.1"/>
    <property type="molecule type" value="Genomic_DNA"/>
</dbReference>
<dbReference type="EMBL" id="BT029184">
    <property type="protein sequence ID" value="ABJ17119.1"/>
    <property type="molecule type" value="mRNA"/>
</dbReference>
<dbReference type="RefSeq" id="NP_001332159.1">
    <property type="nucleotide sequence ID" value="NM_001343773.1"/>
</dbReference>
<dbReference type="RefSeq" id="NP_568424.1">
    <property type="nucleotide sequence ID" value="NM_122188.3"/>
</dbReference>
<dbReference type="SMR" id="Q058N4"/>
<dbReference type="FunCoup" id="Q058N4">
    <property type="interactions" value="2475"/>
</dbReference>
<dbReference type="STRING" id="3702.Q058N4"/>
<dbReference type="TCDB" id="1.A.35.5.3">
    <property type="family name" value="the cora metal ion transporter (mit) family"/>
</dbReference>
<dbReference type="PaxDb" id="3702-AT5G22830.1"/>
<dbReference type="ProteomicsDB" id="250871"/>
<dbReference type="EnsemblPlants" id="AT5G22830.1">
    <property type="protein sequence ID" value="AT5G22830.1"/>
    <property type="gene ID" value="AT5G22830"/>
</dbReference>
<dbReference type="EnsemblPlants" id="AT5G22830.2">
    <property type="protein sequence ID" value="AT5G22830.2"/>
    <property type="gene ID" value="AT5G22830"/>
</dbReference>
<dbReference type="GeneID" id="832346"/>
<dbReference type="Gramene" id="AT5G22830.1">
    <property type="protein sequence ID" value="AT5G22830.1"/>
    <property type="gene ID" value="AT5G22830"/>
</dbReference>
<dbReference type="Gramene" id="AT5G22830.2">
    <property type="protein sequence ID" value="AT5G22830.2"/>
    <property type="gene ID" value="AT5G22830"/>
</dbReference>
<dbReference type="KEGG" id="ath:AT5G22830"/>
<dbReference type="Araport" id="AT5G22830"/>
<dbReference type="TAIR" id="AT5G22830">
    <property type="gene designation" value="MGT10"/>
</dbReference>
<dbReference type="eggNOG" id="KOG2662">
    <property type="taxonomic scope" value="Eukaryota"/>
</dbReference>
<dbReference type="HOGENOM" id="CLU_025144_0_0_1"/>
<dbReference type="InParanoid" id="Q058N4"/>
<dbReference type="OMA" id="MELTKCY"/>
<dbReference type="OrthoDB" id="10251508at2759"/>
<dbReference type="PhylomeDB" id="Q058N4"/>
<dbReference type="PRO" id="PR:Q058N4"/>
<dbReference type="Proteomes" id="UP000006548">
    <property type="component" value="Chromosome 5"/>
</dbReference>
<dbReference type="ExpressionAtlas" id="Q058N4">
    <property type="expression patterns" value="baseline and differential"/>
</dbReference>
<dbReference type="GO" id="GO:0009507">
    <property type="term" value="C:chloroplast"/>
    <property type="evidence" value="ECO:0007005"/>
    <property type="project" value="TAIR"/>
</dbReference>
<dbReference type="GO" id="GO:0009941">
    <property type="term" value="C:chloroplast envelope"/>
    <property type="evidence" value="ECO:0000314"/>
    <property type="project" value="TAIR"/>
</dbReference>
<dbReference type="GO" id="GO:0031969">
    <property type="term" value="C:chloroplast membrane"/>
    <property type="evidence" value="ECO:0007669"/>
    <property type="project" value="UniProtKB-SubCell"/>
</dbReference>
<dbReference type="GO" id="GO:0009536">
    <property type="term" value="C:plastid"/>
    <property type="evidence" value="ECO:0007005"/>
    <property type="project" value="TAIR"/>
</dbReference>
<dbReference type="GO" id="GO:0015095">
    <property type="term" value="F:magnesium ion transmembrane transporter activity"/>
    <property type="evidence" value="ECO:0000315"/>
    <property type="project" value="TAIR"/>
</dbReference>
<dbReference type="GO" id="GO:0010960">
    <property type="term" value="P:magnesium ion homeostasis"/>
    <property type="evidence" value="ECO:0000315"/>
    <property type="project" value="TAIR"/>
</dbReference>
<dbReference type="GO" id="GO:1903830">
    <property type="term" value="P:magnesium ion transmembrane transport"/>
    <property type="evidence" value="ECO:0000315"/>
    <property type="project" value="TAIR"/>
</dbReference>
<dbReference type="GO" id="GO:0010117">
    <property type="term" value="P:photoprotection"/>
    <property type="evidence" value="ECO:0000315"/>
    <property type="project" value="TAIR"/>
</dbReference>
<dbReference type="GO" id="GO:0010027">
    <property type="term" value="P:thylakoid membrane organization"/>
    <property type="evidence" value="ECO:0000315"/>
    <property type="project" value="TAIR"/>
</dbReference>
<dbReference type="CDD" id="cd12823">
    <property type="entry name" value="Mrs2_Mfm1p-like"/>
    <property type="match status" value="1"/>
</dbReference>
<dbReference type="FunFam" id="1.20.58.340:FF:000013">
    <property type="entry name" value="Magnesium transporter MRS2-11, chloroplastic"/>
    <property type="match status" value="1"/>
</dbReference>
<dbReference type="FunFam" id="2.40.128.330:FF:000004">
    <property type="entry name" value="Magnesium transporter MRS2-11, chloroplastic"/>
    <property type="match status" value="1"/>
</dbReference>
<dbReference type="Gene3D" id="2.40.128.330">
    <property type="match status" value="1"/>
</dbReference>
<dbReference type="Gene3D" id="1.20.58.340">
    <property type="entry name" value="Magnesium transport protein CorA, transmembrane region"/>
    <property type="match status" value="1"/>
</dbReference>
<dbReference type="InterPro" id="IPR039204">
    <property type="entry name" value="MRS2-like"/>
</dbReference>
<dbReference type="PANTHER" id="PTHR13890:SF0">
    <property type="entry name" value="MAGNESIUM TRANSPORTER MRS2 HOMOLOG, MITOCHONDRIAL"/>
    <property type="match status" value="1"/>
</dbReference>
<dbReference type="PANTHER" id="PTHR13890">
    <property type="entry name" value="RNA SPLICING PROTEIN MRS2, MITOCHONDRIAL"/>
    <property type="match status" value="1"/>
</dbReference>
<dbReference type="Pfam" id="PF22099">
    <property type="entry name" value="MRS2-like"/>
    <property type="match status" value="1"/>
</dbReference>
<sequence>MALTPIPSTFTSLFNFSDHSPYPSPSLHYLLPGSSPSFSLQLSALSRTPIYFEALKVLSRSKCFAKSPTTAEDFVGDYESLNVSDDDDGSDSNSSDGDNGGGRDDSKKIDSSSSSSSSDSTSLGIREPVYEVVEVKATGAISTRKINRRQLLKSSGLRPRDIRSVDPSLFMTNSVPSLLVREHAILLNLGSLRAIAMRDRVLIFDYNRRGGRAFVDTLMPRLNPRSMNGGPSMPFELEAVESALISRIQRLEQRLMDIEPRVQALLEVLPNRLTADILEELRISKQRLVELGSRAGALRQMLLDLLEDPHEIRRICIMGRNCTLRRGDDDLECTLPSDKLIAEEEEEEIEMLLENYLQRCESCHGQAERLLDSAKEMEDSIAVNLSSRRLEVSRFELLLQVGTFCVAVGALIAGIFGMNLRSYLEEQASAFWLTTGGIIIGAAVAFFLMYSYLSRRKIF</sequence>